<proteinExistence type="inferred from homology"/>
<evidence type="ECO:0000250" key="1">
    <source>
        <dbReference type="UniProtKB" id="P9WJD9"/>
    </source>
</evidence>
<evidence type="ECO:0000256" key="2">
    <source>
        <dbReference type="SAM" id="MobiDB-lite"/>
    </source>
</evidence>
<gene>
    <name evidence="1" type="primary">espB</name>
    <name evidence="1" type="synonym">mtb48</name>
    <name type="ordered locus">MT3996</name>
</gene>
<keyword id="KW-1185">Reference proteome</keyword>
<keyword id="KW-0964">Secreted</keyword>
<feature type="chain" id="PRO_0000427847" description="ESX-1 secretion-associated protein EspB">
    <location>
        <begin position="1"/>
        <end position="460"/>
    </location>
</feature>
<feature type="region of interest" description="Disordered" evidence="2">
    <location>
        <begin position="92"/>
        <end position="116"/>
    </location>
</feature>
<feature type="region of interest" description="Disordered" evidence="2">
    <location>
        <begin position="303"/>
        <end position="335"/>
    </location>
</feature>
<feature type="region of interest" description="Disordered" evidence="2">
    <location>
        <begin position="405"/>
        <end position="441"/>
    </location>
</feature>
<feature type="site" description="Cleavage; by MycP1" evidence="1">
    <location>
        <begin position="358"/>
        <end position="359"/>
    </location>
</feature>
<feature type="site" description="Cleavage; by MycP1" evidence="1">
    <location>
        <begin position="386"/>
        <end position="387"/>
    </location>
</feature>
<organism>
    <name type="scientific">Mycobacterium tuberculosis (strain CDC 1551 / Oshkosh)</name>
    <dbReference type="NCBI Taxonomy" id="83331"/>
    <lineage>
        <taxon>Bacteria</taxon>
        <taxon>Bacillati</taxon>
        <taxon>Actinomycetota</taxon>
        <taxon>Actinomycetes</taxon>
        <taxon>Mycobacteriales</taxon>
        <taxon>Mycobacteriaceae</taxon>
        <taxon>Mycobacterium</taxon>
        <taxon>Mycobacterium tuberculosis complex</taxon>
    </lineage>
</organism>
<sequence length="460" mass="47594">MTQSQTVTVDQQEILNRANEVEAPMADPPTDVPITPCELTAAKNAAQQLVLSADNMREYLAAGAKERQRLATSLRNAAKAYGEVDEEAATALDNDGEGTVQAESAGAVGGDSSAELTDTPRVATAGEPNFMDLKEAARKLETGDQGASLAHFADGWNTFNLTLQGDVKRFRGFDNWEGDAATACEASLDQQRQWILHMAKLSAAMAKQAQYVAQLHVWARREHPTYEDIVGLERLYAENPSARDQILPVYAEYQQRSEKVLTEYNNKAALEPVNPPKPPPAIKIDPPPPPQEQGLIPGFLMPPSDGSGVTPGTGMPAAPMVPPTGSPGGGLPADTAAQLTSAGREAAALSGDVAVKAASLGGGGGGGVPSAPLGSAIGGAESVRPAGAGDIAGLGQGRAGGGAALGGGGMGMPMGAAHQGQGGAKSKGSQQEDEALYTEDRAWTEAVIGNRRRQDSKESK</sequence>
<protein>
    <recommendedName>
        <fullName evidence="1">ESX-1 secretion-associated protein EspB</fullName>
    </recommendedName>
    <alternativeName>
        <fullName evidence="1">Antigen MTB48</fullName>
    </alternativeName>
</protein>
<comment type="subcellular location">
    <subcellularLocation>
        <location evidence="1">Secreted</location>
    </subcellularLocation>
    <text evidence="1">Secreted via the ESX-1 / type VII secretion system (T7SS).</text>
</comment>
<comment type="PTM">
    <text evidence="1">Cleaved in the C-terminal region by MycP1.</text>
</comment>
<accession>P9WJD8</accession>
<accession>L0TH12</accession>
<accession>Q933K8</accession>
<dbReference type="EMBL" id="AE000516">
    <property type="protein sequence ID" value="AAK48364.1"/>
    <property type="molecule type" value="Genomic_DNA"/>
</dbReference>
<dbReference type="PIR" id="G70803">
    <property type="entry name" value="G70803"/>
</dbReference>
<dbReference type="RefSeq" id="WP_003399995.1">
    <property type="nucleotide sequence ID" value="NZ_KK341228.1"/>
</dbReference>
<dbReference type="SMR" id="P9WJD8"/>
<dbReference type="GeneID" id="45427884"/>
<dbReference type="KEGG" id="mtc:MT3996"/>
<dbReference type="PATRIC" id="fig|83331.31.peg.4300"/>
<dbReference type="HOGENOM" id="CLU_039721_0_0_11"/>
<dbReference type="Proteomes" id="UP000001020">
    <property type="component" value="Chromosome"/>
</dbReference>
<dbReference type="GO" id="GO:0005576">
    <property type="term" value="C:extracellular region"/>
    <property type="evidence" value="ECO:0007669"/>
    <property type="project" value="UniProtKB-SubCell"/>
</dbReference>
<dbReference type="FunFam" id="1.20.1260.20:FF:000002">
    <property type="entry name" value="Hypothetical alanine and glycine rich protein"/>
    <property type="match status" value="1"/>
</dbReference>
<dbReference type="Gene3D" id="1.20.1260.20">
    <property type="entry name" value="PPE superfamily"/>
    <property type="match status" value="1"/>
</dbReference>
<dbReference type="InterPro" id="IPR041275">
    <property type="entry name" value="EspB_PE"/>
</dbReference>
<dbReference type="InterPro" id="IPR054056">
    <property type="entry name" value="EspB_PPE"/>
</dbReference>
<dbReference type="InterPro" id="IPR038332">
    <property type="entry name" value="PPE_sf"/>
</dbReference>
<dbReference type="Pfam" id="PF18625">
    <property type="entry name" value="EspB_PE"/>
    <property type="match status" value="1"/>
</dbReference>
<dbReference type="Pfam" id="PF21856">
    <property type="entry name" value="EspB_PPE"/>
    <property type="match status" value="1"/>
</dbReference>
<dbReference type="SUPFAM" id="SSF140459">
    <property type="entry name" value="PE/PPE dimer-like"/>
    <property type="match status" value="1"/>
</dbReference>
<reference key="1">
    <citation type="journal article" date="2002" name="J. Bacteriol.">
        <title>Whole-genome comparison of Mycobacterium tuberculosis clinical and laboratory strains.</title>
        <authorList>
            <person name="Fleischmann R.D."/>
            <person name="Alland D."/>
            <person name="Eisen J.A."/>
            <person name="Carpenter L."/>
            <person name="White O."/>
            <person name="Peterson J.D."/>
            <person name="DeBoy R.T."/>
            <person name="Dodson R.J."/>
            <person name="Gwinn M.L."/>
            <person name="Haft D.H."/>
            <person name="Hickey E.K."/>
            <person name="Kolonay J.F."/>
            <person name="Nelson W.C."/>
            <person name="Umayam L.A."/>
            <person name="Ermolaeva M.D."/>
            <person name="Salzberg S.L."/>
            <person name="Delcher A."/>
            <person name="Utterback T.R."/>
            <person name="Weidman J.F."/>
            <person name="Khouri H.M."/>
            <person name="Gill J."/>
            <person name="Mikula A."/>
            <person name="Bishai W."/>
            <person name="Jacobs W.R. Jr."/>
            <person name="Venter J.C."/>
            <person name="Fraser C.M."/>
        </authorList>
    </citation>
    <scope>NUCLEOTIDE SEQUENCE [LARGE SCALE GENOMIC DNA]</scope>
    <source>
        <strain>CDC 1551 / Oshkosh</strain>
    </source>
</reference>
<name>ESPB_MYCTO</name>